<comment type="function">
    <text evidence="1">Bifunctional growth regulator. May contribute to the rapid growth of cartilage and vascular invasion prior to the replacement of cartilage by bone during endochondral bone development. Plays a role as antiangiogenic factor in cardiac valves to suppress neovascularization (By similarity).</text>
</comment>
<comment type="subcellular location">
    <molecule>Chondromodulin-1</molecule>
    <subcellularLocation>
        <location evidence="1">Secreted</location>
        <location evidence="1">Extracellular space</location>
        <location evidence="1">Extracellular matrix</location>
    </subcellularLocation>
    <text evidence="1">Accumulated in the inter-territorial matrix of cartilage.</text>
</comment>
<comment type="subcellular location">
    <molecule>Chondrosurfactant protein</molecule>
    <subcellularLocation>
        <location evidence="1">Endomembrane system</location>
        <topology evidence="1">Single-pass membrane protein</topology>
    </subcellularLocation>
</comment>
<comment type="tissue specificity">
    <text>Expressed in the cartilage and in fetal precartilaginous tissues as well as in heart and eye.</text>
</comment>
<comment type="developmental stage">
    <text>Expression onset occurs between stage 10 and stage 13.</text>
</comment>
<comment type="PTM">
    <text evidence="1">After cleavage, the post-translationally modified ChM-I is secreted as a glycoprotein.</text>
</comment>
<comment type="similarity">
    <text evidence="6">Belongs to the chondromodulin-1 family.</text>
</comment>
<accession>Q9PUU8</accession>
<accession>Q9YI63</accession>
<gene>
    <name evidence="2" type="primary">CNMD</name>
    <name evidence="2" type="synonym">CHMI</name>
    <name evidence="2" type="synonym">LECT1</name>
</gene>
<dbReference type="EMBL" id="AF138280">
    <property type="protein sequence ID" value="AAD32212.1"/>
    <property type="molecule type" value="mRNA"/>
</dbReference>
<dbReference type="EMBL" id="AF027380">
    <property type="protein sequence ID" value="AAD08642.1"/>
    <property type="molecule type" value="mRNA"/>
</dbReference>
<dbReference type="RefSeq" id="NP_990141.1">
    <property type="nucleotide sequence ID" value="NM_204810.1"/>
</dbReference>
<dbReference type="SMR" id="Q9PUU8"/>
<dbReference type="FunCoup" id="Q9PUU8">
    <property type="interactions" value="17"/>
</dbReference>
<dbReference type="STRING" id="9031.ENSGALP00000027337"/>
<dbReference type="GlyCosmos" id="Q9PUU8">
    <property type="glycosylation" value="1 site, No reported glycans"/>
</dbReference>
<dbReference type="GlyGen" id="Q9PUU8">
    <property type="glycosylation" value="1 site"/>
</dbReference>
<dbReference type="PaxDb" id="9031-ENSGALP00000027337"/>
<dbReference type="GeneID" id="395600"/>
<dbReference type="KEGG" id="gga:395600"/>
<dbReference type="CTD" id="395600"/>
<dbReference type="VEuPathDB" id="HostDB:geneid_395600"/>
<dbReference type="eggNOG" id="ENOG502QVPC">
    <property type="taxonomic scope" value="Eukaryota"/>
</dbReference>
<dbReference type="InParanoid" id="Q9PUU8"/>
<dbReference type="OrthoDB" id="5985282at2759"/>
<dbReference type="PhylomeDB" id="Q9PUU8"/>
<dbReference type="PRO" id="PR:Q9PUU8"/>
<dbReference type="Proteomes" id="UP000000539">
    <property type="component" value="Unassembled WGS sequence"/>
</dbReference>
<dbReference type="GO" id="GO:0012505">
    <property type="term" value="C:endomembrane system"/>
    <property type="evidence" value="ECO:0007669"/>
    <property type="project" value="UniProtKB-SubCell"/>
</dbReference>
<dbReference type="GO" id="GO:0005576">
    <property type="term" value="C:extracellular region"/>
    <property type="evidence" value="ECO:0007669"/>
    <property type="project" value="UniProtKB-KW"/>
</dbReference>
<dbReference type="GO" id="GO:0016020">
    <property type="term" value="C:membrane"/>
    <property type="evidence" value="ECO:0007669"/>
    <property type="project" value="UniProtKB-KW"/>
</dbReference>
<dbReference type="GO" id="GO:0051216">
    <property type="term" value="P:cartilage development"/>
    <property type="evidence" value="ECO:0007669"/>
    <property type="project" value="UniProtKB-KW"/>
</dbReference>
<dbReference type="GO" id="GO:0030154">
    <property type="term" value="P:cell differentiation"/>
    <property type="evidence" value="ECO:0007669"/>
    <property type="project" value="UniProtKB-KW"/>
</dbReference>
<dbReference type="GO" id="GO:0016525">
    <property type="term" value="P:negative regulation of angiogenesis"/>
    <property type="evidence" value="ECO:0000318"/>
    <property type="project" value="GO_Central"/>
</dbReference>
<dbReference type="GO" id="GO:0001937">
    <property type="term" value="P:negative regulation of endothelial cell proliferation"/>
    <property type="evidence" value="ECO:0000318"/>
    <property type="project" value="GO_Central"/>
</dbReference>
<dbReference type="FunFam" id="3.30.390.150:FF:000001">
    <property type="entry name" value="leukocyte cell-derived chemotaxin 1"/>
    <property type="match status" value="1"/>
</dbReference>
<dbReference type="Gene3D" id="3.30.390.150">
    <property type="match status" value="1"/>
</dbReference>
<dbReference type="InterPro" id="IPR007084">
    <property type="entry name" value="BRICHOS_dom"/>
</dbReference>
<dbReference type="InterPro" id="IPR043405">
    <property type="entry name" value="Chondromodulin/Tenomodulin"/>
</dbReference>
<dbReference type="PANTHER" id="PTHR14064">
    <property type="entry name" value="CHONDROMODULIN-RELATED"/>
    <property type="match status" value="1"/>
</dbReference>
<dbReference type="PANTHER" id="PTHR14064:SF6">
    <property type="entry name" value="LEUKOCYTE CELL-DERIVED CHEMOTAXIN 1"/>
    <property type="match status" value="1"/>
</dbReference>
<dbReference type="Pfam" id="PF04089">
    <property type="entry name" value="BRICHOS"/>
    <property type="match status" value="1"/>
</dbReference>
<dbReference type="SMART" id="SM01039">
    <property type="entry name" value="BRICHOS"/>
    <property type="match status" value="1"/>
</dbReference>
<dbReference type="PROSITE" id="PS50869">
    <property type="entry name" value="BRICHOS"/>
    <property type="match status" value="1"/>
</dbReference>
<proteinExistence type="evidence at transcript level"/>
<evidence type="ECO:0000250" key="1"/>
<evidence type="ECO:0000250" key="2">
    <source>
        <dbReference type="UniProtKB" id="O75829"/>
    </source>
</evidence>
<evidence type="ECO:0000255" key="3"/>
<evidence type="ECO:0000255" key="4">
    <source>
        <dbReference type="PROSITE-ProRule" id="PRU00255"/>
    </source>
</evidence>
<evidence type="ECO:0000256" key="5">
    <source>
        <dbReference type="SAM" id="MobiDB-lite"/>
    </source>
</evidence>
<evidence type="ECO:0000305" key="6"/>
<keyword id="KW-0891">Chondrogenesis</keyword>
<keyword id="KW-0165">Cleavage on pair of basic residues</keyword>
<keyword id="KW-0217">Developmental protein</keyword>
<keyword id="KW-0221">Differentiation</keyword>
<keyword id="KW-1015">Disulfide bond</keyword>
<keyword id="KW-0272">Extracellular matrix</keyword>
<keyword id="KW-0325">Glycoprotein</keyword>
<keyword id="KW-0472">Membrane</keyword>
<keyword id="KW-1185">Reference proteome</keyword>
<keyword id="KW-0964">Secreted</keyword>
<keyword id="KW-0812">Transmembrane</keyword>
<keyword id="KW-1133">Transmembrane helix</keyword>
<protein>
    <recommendedName>
        <fullName evidence="6">Leukocyte cell-derived chemotaxin 1</fullName>
    </recommendedName>
    <alternativeName>
        <fullName evidence="2">Chondromodulin</fullName>
    </alternativeName>
    <component>
        <recommendedName>
            <fullName>Chondrosurfactant protein</fullName>
            <shortName>CH-SP</shortName>
        </recommendedName>
    </component>
    <component>
        <recommendedName>
            <fullName>Chondromodulin-1</fullName>
        </recommendedName>
        <alternativeName>
            <fullName>Chondromodulin-I</fullName>
            <shortName>ChM-I</shortName>
        </alternativeName>
    </component>
</protein>
<organism>
    <name type="scientific">Gallus gallus</name>
    <name type="common">Chicken</name>
    <dbReference type="NCBI Taxonomy" id="9031"/>
    <lineage>
        <taxon>Eukaryota</taxon>
        <taxon>Metazoa</taxon>
        <taxon>Chordata</taxon>
        <taxon>Craniata</taxon>
        <taxon>Vertebrata</taxon>
        <taxon>Euteleostomi</taxon>
        <taxon>Archelosauria</taxon>
        <taxon>Archosauria</taxon>
        <taxon>Dinosauria</taxon>
        <taxon>Saurischia</taxon>
        <taxon>Theropoda</taxon>
        <taxon>Coelurosauria</taxon>
        <taxon>Aves</taxon>
        <taxon>Neognathae</taxon>
        <taxon>Galloanserae</taxon>
        <taxon>Galliformes</taxon>
        <taxon>Phasianidae</taxon>
        <taxon>Phasianinae</taxon>
        <taxon>Gallus</taxon>
    </lineage>
</organism>
<reference key="1">
    <citation type="journal article" date="1999" name="Dev. Dyn.">
        <title>Spatio-temporal distribution of Chondromodulin-I mRNA in the chicken embryo: expression during cartilage development and formation of the heart and eye.</title>
        <authorList>
            <person name="Dietz U.H."/>
            <person name="Ziegelmeier G."/>
            <person name="Bittner K."/>
            <person name="Bruckner P."/>
            <person name="Balling R."/>
        </authorList>
    </citation>
    <scope>NUCLEOTIDE SEQUENCE [MRNA]</scope>
</reference>
<reference key="2">
    <citation type="journal article" date="1999" name="FEBS Lett.">
        <title>Generation of multiple transcripts from the chicken chondromodulin-I gene and their expression during embryonic development.</title>
        <authorList>
            <person name="Shukunami C."/>
            <person name="Yamamoto S."/>
            <person name="Tanabe T."/>
            <person name="Hiraki Y."/>
        </authorList>
    </citation>
    <scope>NUCLEOTIDE SEQUENCE [MRNA]</scope>
    <source>
        <strain>White leghorn</strain>
        <tissue>Fetal sternum</tissue>
    </source>
</reference>
<sequence>MAEGSEKVPIARAGPEDVEQGLPPAYTAAVPPPGPGRLLKAGATVLIAGALLLLAGAIGAFYFWKATERQVYNVHYTMSINGKVQDGSMEIDAGNNLETFKTGSGSEEAVEVHDFQIGITGIRFAGGEKCYIKAQPKARVPEVDAMTKASLSSDLEDEIMPVRFDENSLIWVAADEPIKHNGFLSPKILELCGDLPIFWLRPTYPKDKQRERREMKRNKRQSESNFDAEHRAAAAEEVNTRSTPTQLTQDLGPQSNETRPMQQESDQTLNPDNPYNQLEGEGMAFDPMLDHLGVCCIECRRSYTQCQRICEPLLGYYPWPYNYQGCRTACRIIMPCSWWVARIMGVV</sequence>
<feature type="chain" id="PRO_0000005358" description="Chondrosurfactant protein" evidence="1">
    <location>
        <begin position="1"/>
        <end position="209"/>
    </location>
</feature>
<feature type="propeptide" id="PRO_0000005359" evidence="3">
    <location>
        <begin position="210"/>
        <end position="213"/>
    </location>
</feature>
<feature type="chain" id="PRO_0000005360" description="Chondromodulin-1">
    <location>
        <begin position="214"/>
        <end position="347"/>
    </location>
</feature>
<feature type="transmembrane region" description="Helical" evidence="3">
    <location>
        <begin position="45"/>
        <end position="65"/>
    </location>
</feature>
<feature type="domain" description="BRICHOS" evidence="4">
    <location>
        <begin position="103"/>
        <end position="200"/>
    </location>
</feature>
<feature type="region of interest" description="Disordered" evidence="5">
    <location>
        <begin position="1"/>
        <end position="29"/>
    </location>
</feature>
<feature type="region of interest" description="Disordered" evidence="5">
    <location>
        <begin position="208"/>
        <end position="281"/>
    </location>
</feature>
<feature type="compositionally biased region" description="Polar residues" evidence="5">
    <location>
        <begin position="240"/>
        <end position="276"/>
    </location>
</feature>
<feature type="glycosylation site" description="N-linked (GlcNAc...) asparagine" evidence="3">
    <location>
        <position position="256"/>
    </location>
</feature>
<feature type="disulfide bond" evidence="1">
    <location>
        <begin position="130"/>
        <end position="192"/>
    </location>
</feature>
<feature type="disulfide bond" evidence="1">
    <location>
        <begin position="295"/>
        <end position="299"/>
    </location>
</feature>
<feature type="disulfide bond" evidence="1">
    <location>
        <begin position="296"/>
        <end position="336"/>
    </location>
</feature>
<feature type="disulfide bond" evidence="1">
    <location>
        <begin position="306"/>
        <end position="330"/>
    </location>
</feature>
<feature type="disulfide bond" evidence="1">
    <location>
        <begin position="310"/>
        <end position="326"/>
    </location>
</feature>
<feature type="sequence conflict" description="In Ref. 2; AAD08642." evidence="6" ref="2">
    <original>D</original>
    <variation>E</variation>
    <location>
        <position position="250"/>
    </location>
</feature>
<name>CNMD_CHICK</name>